<feature type="chain" id="PRO_1000025404" description="Co-chaperonin GroES">
    <location>
        <begin position="1"/>
        <end position="95"/>
    </location>
</feature>
<reference key="1">
    <citation type="journal article" date="2005" name="Genome Res.">
        <title>Comparative and functional genomic analyses of the pathogenicity of phytopathogen Xanthomonas campestris pv. campestris.</title>
        <authorList>
            <person name="Qian W."/>
            <person name="Jia Y."/>
            <person name="Ren S.-X."/>
            <person name="He Y.-Q."/>
            <person name="Feng J.-X."/>
            <person name="Lu L.-F."/>
            <person name="Sun Q."/>
            <person name="Ying G."/>
            <person name="Tang D.-J."/>
            <person name="Tang H."/>
            <person name="Wu W."/>
            <person name="Hao P."/>
            <person name="Wang L."/>
            <person name="Jiang B.-L."/>
            <person name="Zeng S."/>
            <person name="Gu W.-Y."/>
            <person name="Lu G."/>
            <person name="Rong L."/>
            <person name="Tian Y."/>
            <person name="Yao Z."/>
            <person name="Fu G."/>
            <person name="Chen B."/>
            <person name="Fang R."/>
            <person name="Qiang B."/>
            <person name="Chen Z."/>
            <person name="Zhao G.-P."/>
            <person name="Tang J.-L."/>
            <person name="He C."/>
        </authorList>
    </citation>
    <scope>NUCLEOTIDE SEQUENCE [LARGE SCALE GENOMIC DNA]</scope>
    <source>
        <strain>8004</strain>
    </source>
</reference>
<gene>
    <name evidence="1" type="primary">groES</name>
    <name evidence="1" type="synonym">groS</name>
    <name type="ordered locus">XC_0534</name>
</gene>
<proteinExistence type="inferred from homology"/>
<comment type="function">
    <text evidence="1">Together with the chaperonin GroEL, plays an essential role in assisting protein folding. The GroEL-GroES system forms a nano-cage that allows encapsulation of the non-native substrate proteins and provides a physical environment optimized to promote and accelerate protein folding. GroES binds to the apical surface of the GroEL ring, thereby capping the opening of the GroEL channel.</text>
</comment>
<comment type="subunit">
    <text evidence="1">Heptamer of 7 subunits arranged in a ring. Interacts with the chaperonin GroEL.</text>
</comment>
<comment type="subcellular location">
    <subcellularLocation>
        <location evidence="1">Cytoplasm</location>
    </subcellularLocation>
</comment>
<comment type="similarity">
    <text evidence="1">Belongs to the GroES chaperonin family.</text>
</comment>
<accession>Q4UZA8</accession>
<dbReference type="EMBL" id="CP000050">
    <property type="protein sequence ID" value="AAY47615.1"/>
    <property type="molecule type" value="Genomic_DNA"/>
</dbReference>
<dbReference type="RefSeq" id="WP_003483210.1">
    <property type="nucleotide sequence ID" value="NZ_CP155948.1"/>
</dbReference>
<dbReference type="SMR" id="Q4UZA8"/>
<dbReference type="KEGG" id="xcb:XC_0534"/>
<dbReference type="HOGENOM" id="CLU_132825_2_0_6"/>
<dbReference type="Proteomes" id="UP000000420">
    <property type="component" value="Chromosome"/>
</dbReference>
<dbReference type="GO" id="GO:0005737">
    <property type="term" value="C:cytoplasm"/>
    <property type="evidence" value="ECO:0007669"/>
    <property type="project" value="UniProtKB-SubCell"/>
</dbReference>
<dbReference type="GO" id="GO:0005524">
    <property type="term" value="F:ATP binding"/>
    <property type="evidence" value="ECO:0007669"/>
    <property type="project" value="InterPro"/>
</dbReference>
<dbReference type="GO" id="GO:0046872">
    <property type="term" value="F:metal ion binding"/>
    <property type="evidence" value="ECO:0007669"/>
    <property type="project" value="TreeGrafter"/>
</dbReference>
<dbReference type="GO" id="GO:0044183">
    <property type="term" value="F:protein folding chaperone"/>
    <property type="evidence" value="ECO:0007669"/>
    <property type="project" value="InterPro"/>
</dbReference>
<dbReference type="GO" id="GO:0051087">
    <property type="term" value="F:protein-folding chaperone binding"/>
    <property type="evidence" value="ECO:0007669"/>
    <property type="project" value="TreeGrafter"/>
</dbReference>
<dbReference type="GO" id="GO:0051082">
    <property type="term" value="F:unfolded protein binding"/>
    <property type="evidence" value="ECO:0007669"/>
    <property type="project" value="TreeGrafter"/>
</dbReference>
<dbReference type="GO" id="GO:0051085">
    <property type="term" value="P:chaperone cofactor-dependent protein refolding"/>
    <property type="evidence" value="ECO:0007669"/>
    <property type="project" value="TreeGrafter"/>
</dbReference>
<dbReference type="CDD" id="cd00320">
    <property type="entry name" value="cpn10"/>
    <property type="match status" value="1"/>
</dbReference>
<dbReference type="FunFam" id="2.30.33.40:FF:000001">
    <property type="entry name" value="10 kDa chaperonin"/>
    <property type="match status" value="1"/>
</dbReference>
<dbReference type="Gene3D" id="2.30.33.40">
    <property type="entry name" value="GroES chaperonin"/>
    <property type="match status" value="1"/>
</dbReference>
<dbReference type="HAMAP" id="MF_00580">
    <property type="entry name" value="CH10"/>
    <property type="match status" value="1"/>
</dbReference>
<dbReference type="InterPro" id="IPR020818">
    <property type="entry name" value="Chaperonin_GroES"/>
</dbReference>
<dbReference type="InterPro" id="IPR037124">
    <property type="entry name" value="Chaperonin_GroES_sf"/>
</dbReference>
<dbReference type="InterPro" id="IPR018369">
    <property type="entry name" value="Chaprnonin_Cpn10_CS"/>
</dbReference>
<dbReference type="InterPro" id="IPR011032">
    <property type="entry name" value="GroES-like_sf"/>
</dbReference>
<dbReference type="NCBIfam" id="NF001527">
    <property type="entry name" value="PRK00364.1-2"/>
    <property type="match status" value="1"/>
</dbReference>
<dbReference type="NCBIfam" id="NF001531">
    <property type="entry name" value="PRK00364.2-2"/>
    <property type="match status" value="1"/>
</dbReference>
<dbReference type="NCBIfam" id="NF001533">
    <property type="entry name" value="PRK00364.2-4"/>
    <property type="match status" value="1"/>
</dbReference>
<dbReference type="PANTHER" id="PTHR10772">
    <property type="entry name" value="10 KDA HEAT SHOCK PROTEIN"/>
    <property type="match status" value="1"/>
</dbReference>
<dbReference type="PANTHER" id="PTHR10772:SF58">
    <property type="entry name" value="CO-CHAPERONIN GROES"/>
    <property type="match status" value="1"/>
</dbReference>
<dbReference type="Pfam" id="PF00166">
    <property type="entry name" value="Cpn10"/>
    <property type="match status" value="1"/>
</dbReference>
<dbReference type="PRINTS" id="PR00297">
    <property type="entry name" value="CHAPERONIN10"/>
</dbReference>
<dbReference type="SMART" id="SM00883">
    <property type="entry name" value="Cpn10"/>
    <property type="match status" value="1"/>
</dbReference>
<dbReference type="SUPFAM" id="SSF50129">
    <property type="entry name" value="GroES-like"/>
    <property type="match status" value="1"/>
</dbReference>
<dbReference type="PROSITE" id="PS00681">
    <property type="entry name" value="CHAPERONINS_CPN10"/>
    <property type="match status" value="1"/>
</dbReference>
<keyword id="KW-0143">Chaperone</keyword>
<keyword id="KW-0963">Cytoplasm</keyword>
<organism>
    <name type="scientific">Xanthomonas campestris pv. campestris (strain 8004)</name>
    <dbReference type="NCBI Taxonomy" id="314565"/>
    <lineage>
        <taxon>Bacteria</taxon>
        <taxon>Pseudomonadati</taxon>
        <taxon>Pseudomonadota</taxon>
        <taxon>Gammaproteobacteria</taxon>
        <taxon>Lysobacterales</taxon>
        <taxon>Lysobacteraceae</taxon>
        <taxon>Xanthomonas</taxon>
    </lineage>
</organism>
<name>CH10_XANC8</name>
<evidence type="ECO:0000255" key="1">
    <source>
        <dbReference type="HAMAP-Rule" id="MF_00580"/>
    </source>
</evidence>
<protein>
    <recommendedName>
        <fullName evidence="1">Co-chaperonin GroES</fullName>
    </recommendedName>
    <alternativeName>
        <fullName evidence="1">10 kDa chaperonin</fullName>
    </alternativeName>
    <alternativeName>
        <fullName evidence="1">Chaperonin-10</fullName>
        <shortName evidence="1">Cpn10</shortName>
    </alternativeName>
</protein>
<sequence>MSIKPLHDRVVVKPIEADEVSAGGIVIPDSAKEKSTKGEVVAIGAGKPLDNGSLRAPVVKVGDKVIYGQYAGSSYKSEGVEYKVLREDDILAVIG</sequence>